<evidence type="ECO:0000255" key="1">
    <source>
        <dbReference type="HAMAP-Rule" id="MF_00511"/>
    </source>
</evidence>
<evidence type="ECO:0000305" key="2"/>
<dbReference type="EMBL" id="AE008384">
    <property type="protein sequence ID" value="AAM30896.1"/>
    <property type="molecule type" value="Genomic_DNA"/>
</dbReference>
<dbReference type="RefSeq" id="WP_011033149.1">
    <property type="nucleotide sequence ID" value="NC_003901.1"/>
</dbReference>
<dbReference type="SMR" id="Q8PXL8"/>
<dbReference type="KEGG" id="mma:MM_1200"/>
<dbReference type="PATRIC" id="fig|192952.21.peg.1404"/>
<dbReference type="eggNOG" id="arCOG01885">
    <property type="taxonomic scope" value="Archaea"/>
</dbReference>
<dbReference type="HOGENOM" id="CLU_176720_1_0_2"/>
<dbReference type="Proteomes" id="UP000000595">
    <property type="component" value="Chromosome"/>
</dbReference>
<dbReference type="GO" id="GO:0005829">
    <property type="term" value="C:cytosol"/>
    <property type="evidence" value="ECO:0007669"/>
    <property type="project" value="UniProtKB-ARBA"/>
</dbReference>
<dbReference type="GO" id="GO:1990904">
    <property type="term" value="C:ribonucleoprotein complex"/>
    <property type="evidence" value="ECO:0007669"/>
    <property type="project" value="UniProtKB-KW"/>
</dbReference>
<dbReference type="GO" id="GO:0005840">
    <property type="term" value="C:ribosome"/>
    <property type="evidence" value="ECO:0007669"/>
    <property type="project" value="UniProtKB-KW"/>
</dbReference>
<dbReference type="GO" id="GO:0003735">
    <property type="term" value="F:structural constituent of ribosome"/>
    <property type="evidence" value="ECO:0007669"/>
    <property type="project" value="InterPro"/>
</dbReference>
<dbReference type="GO" id="GO:0006412">
    <property type="term" value="P:translation"/>
    <property type="evidence" value="ECO:0007669"/>
    <property type="project" value="UniProtKB-UniRule"/>
</dbReference>
<dbReference type="Gene3D" id="1.10.60.20">
    <property type="entry name" value="Ribosomal protein S17e-like"/>
    <property type="match status" value="1"/>
</dbReference>
<dbReference type="HAMAP" id="MF_00511">
    <property type="entry name" value="Ribosomal_eS17"/>
    <property type="match status" value="1"/>
</dbReference>
<dbReference type="InterPro" id="IPR001210">
    <property type="entry name" value="Ribosomal_eS17"/>
</dbReference>
<dbReference type="InterPro" id="IPR018273">
    <property type="entry name" value="Ribosomal_eS17_CS"/>
</dbReference>
<dbReference type="InterPro" id="IPR036401">
    <property type="entry name" value="Ribosomal_eS17_sf"/>
</dbReference>
<dbReference type="NCBIfam" id="NF002242">
    <property type="entry name" value="PRK01151.1"/>
    <property type="match status" value="1"/>
</dbReference>
<dbReference type="PANTHER" id="PTHR10732">
    <property type="entry name" value="40S RIBOSOMAL PROTEIN S17"/>
    <property type="match status" value="1"/>
</dbReference>
<dbReference type="PANTHER" id="PTHR10732:SF0">
    <property type="entry name" value="40S RIBOSOMAL PROTEIN S17"/>
    <property type="match status" value="1"/>
</dbReference>
<dbReference type="Pfam" id="PF00833">
    <property type="entry name" value="Ribosomal_S17e"/>
    <property type="match status" value="1"/>
</dbReference>
<dbReference type="SUPFAM" id="SSF116820">
    <property type="entry name" value="Rps17e-like"/>
    <property type="match status" value="1"/>
</dbReference>
<dbReference type="PROSITE" id="PS00712">
    <property type="entry name" value="RIBOSOMAL_S17E"/>
    <property type="match status" value="1"/>
</dbReference>
<protein>
    <recommendedName>
        <fullName evidence="1">Small ribosomal subunit protein eS17</fullName>
    </recommendedName>
    <alternativeName>
        <fullName evidence="2">30S ribosomal protein S17e</fullName>
    </alternativeName>
</protein>
<sequence>MGNIRETNIKRTAFSLIENYGEVFTKDFETNKALVTKYTTIESKIIRNRVAGYVTRKVARMKVY</sequence>
<proteinExistence type="inferred from homology"/>
<accession>Q8PXL8</accession>
<feature type="chain" id="PRO_0000141555" description="Small ribosomal subunit protein eS17">
    <location>
        <begin position="1"/>
        <end position="64"/>
    </location>
</feature>
<keyword id="KW-0687">Ribonucleoprotein</keyword>
<keyword id="KW-0689">Ribosomal protein</keyword>
<organism>
    <name type="scientific">Methanosarcina mazei (strain ATCC BAA-159 / DSM 3647 / Goe1 / Go1 / JCM 11833 / OCM 88)</name>
    <name type="common">Methanosarcina frisia</name>
    <dbReference type="NCBI Taxonomy" id="192952"/>
    <lineage>
        <taxon>Archaea</taxon>
        <taxon>Methanobacteriati</taxon>
        <taxon>Methanobacteriota</taxon>
        <taxon>Stenosarchaea group</taxon>
        <taxon>Methanomicrobia</taxon>
        <taxon>Methanosarcinales</taxon>
        <taxon>Methanosarcinaceae</taxon>
        <taxon>Methanosarcina</taxon>
    </lineage>
</organism>
<gene>
    <name evidence="1" type="primary">rps17e</name>
    <name type="ordered locus">MM_1200</name>
</gene>
<comment type="similarity">
    <text evidence="1">Belongs to the eukaryotic ribosomal protein eS17 family.</text>
</comment>
<reference key="1">
    <citation type="journal article" date="2002" name="J. Mol. Microbiol. Biotechnol.">
        <title>The genome of Methanosarcina mazei: evidence for lateral gene transfer between Bacteria and Archaea.</title>
        <authorList>
            <person name="Deppenmeier U."/>
            <person name="Johann A."/>
            <person name="Hartsch T."/>
            <person name="Merkl R."/>
            <person name="Schmitz R.A."/>
            <person name="Martinez-Arias R."/>
            <person name="Henne A."/>
            <person name="Wiezer A."/>
            <person name="Baeumer S."/>
            <person name="Jacobi C."/>
            <person name="Brueggemann H."/>
            <person name="Lienard T."/>
            <person name="Christmann A."/>
            <person name="Boemecke M."/>
            <person name="Steckel S."/>
            <person name="Bhattacharyya A."/>
            <person name="Lykidis A."/>
            <person name="Overbeek R."/>
            <person name="Klenk H.-P."/>
            <person name="Gunsalus R.P."/>
            <person name="Fritz H.-J."/>
            <person name="Gottschalk G."/>
        </authorList>
    </citation>
    <scope>NUCLEOTIDE SEQUENCE [LARGE SCALE GENOMIC DNA]</scope>
    <source>
        <strain>ATCC BAA-159 / DSM 3647 / Goe1 / Go1 / JCM 11833 / OCM 88</strain>
    </source>
</reference>
<name>RS17E_METMA</name>